<dbReference type="EMBL" id="AP006861">
    <property type="protein sequence ID" value="BAE81593.1"/>
    <property type="molecule type" value="Genomic_DNA"/>
</dbReference>
<dbReference type="RefSeq" id="WP_011458368.1">
    <property type="nucleotide sequence ID" value="NC_007899.1"/>
</dbReference>
<dbReference type="STRING" id="264202.CF0821"/>
<dbReference type="KEGG" id="cfe:CF0821"/>
<dbReference type="eggNOG" id="COG1361">
    <property type="taxonomic scope" value="Bacteria"/>
</dbReference>
<dbReference type="HOGENOM" id="CLU_029611_0_0_0"/>
<dbReference type="OrthoDB" id="16744at2"/>
<dbReference type="Proteomes" id="UP000001260">
    <property type="component" value="Chromosome"/>
</dbReference>
<dbReference type="GO" id="GO:0042597">
    <property type="term" value="C:periplasmic space"/>
    <property type="evidence" value="ECO:0007669"/>
    <property type="project" value="UniProtKB-SubCell"/>
</dbReference>
<dbReference type="GO" id="GO:0005201">
    <property type="term" value="F:extracellular matrix structural constituent"/>
    <property type="evidence" value="ECO:0007669"/>
    <property type="project" value="InterPro"/>
</dbReference>
<dbReference type="GO" id="GO:0008360">
    <property type="term" value="P:regulation of cell shape"/>
    <property type="evidence" value="ECO:0007669"/>
    <property type="project" value="UniProtKB-KW"/>
</dbReference>
<dbReference type="InterPro" id="IPR003506">
    <property type="entry name" value="Chlam_OMP6"/>
</dbReference>
<dbReference type="InterPro" id="IPR051172">
    <property type="entry name" value="Chlamydia_OmcB"/>
</dbReference>
<dbReference type="InterPro" id="IPR047589">
    <property type="entry name" value="DUF11_rpt"/>
</dbReference>
<dbReference type="InterPro" id="IPR001434">
    <property type="entry name" value="OmcB-like_DUF11"/>
</dbReference>
<dbReference type="NCBIfam" id="TIGR01451">
    <property type="entry name" value="B_ant_repeat"/>
    <property type="match status" value="1"/>
</dbReference>
<dbReference type="PANTHER" id="PTHR34819">
    <property type="entry name" value="LARGE CYSTEINE-RICH PERIPLASMIC PROTEIN OMCB"/>
    <property type="match status" value="1"/>
</dbReference>
<dbReference type="PANTHER" id="PTHR34819:SF4">
    <property type="entry name" value="LARGE CYSTEINE-RICH PERIPLASMIC PROTEIN OMCB"/>
    <property type="match status" value="1"/>
</dbReference>
<dbReference type="Pfam" id="PF03504">
    <property type="entry name" value="Chlam_OMP6"/>
    <property type="match status" value="1"/>
</dbReference>
<dbReference type="Pfam" id="PF01345">
    <property type="entry name" value="DUF11"/>
    <property type="match status" value="2"/>
</dbReference>
<dbReference type="PRINTS" id="PR01336">
    <property type="entry name" value="CHLAMIDIAOM6"/>
</dbReference>
<gene>
    <name type="primary">omcB</name>
    <name type="synonym">omp15</name>
    <name type="ordered locus">CF0821</name>
</gene>
<feature type="signal peptide" evidence="2">
    <location>
        <begin position="1"/>
        <end position="24"/>
    </location>
</feature>
<feature type="propeptide" id="PRO_0000248866" evidence="2">
    <location>
        <begin position="25"/>
        <end position="40"/>
    </location>
</feature>
<feature type="chain" id="PRO_0000248867" description="Large cysteine-rich periplasmic protein OmcB">
    <location>
        <begin position="41"/>
        <end position="558"/>
    </location>
</feature>
<evidence type="ECO:0000250" key="1"/>
<evidence type="ECO:0000255" key="2"/>
<evidence type="ECO:0000305" key="3"/>
<name>OMCB_CHLFF</name>
<accession>Q253E5</accession>
<reference key="1">
    <citation type="journal article" date="2006" name="DNA Res.">
        <title>Genome sequence of the cat pathogen, Chlamydophila felis.</title>
        <authorList>
            <person name="Azuma Y."/>
            <person name="Hirakawa H."/>
            <person name="Yamashita A."/>
            <person name="Cai Y."/>
            <person name="Rahman M.A."/>
            <person name="Suzuki H."/>
            <person name="Mitaku S."/>
            <person name="Toh H."/>
            <person name="Goto S."/>
            <person name="Murakami T."/>
            <person name="Sugi K."/>
            <person name="Hayashi H."/>
            <person name="Fukushi H."/>
            <person name="Hattori M."/>
            <person name="Kuhara S."/>
            <person name="Shirai M."/>
        </authorList>
    </citation>
    <scope>NUCLEOTIDE SEQUENCE [LARGE SCALE GENOMIC DNA]</scope>
    <source>
        <strain>Fe/C-56</strain>
    </source>
</reference>
<organism>
    <name type="scientific">Chlamydia felis (strain Fe/C-56)</name>
    <name type="common">Chlamydophila felis</name>
    <dbReference type="NCBI Taxonomy" id="264202"/>
    <lineage>
        <taxon>Bacteria</taxon>
        <taxon>Pseudomonadati</taxon>
        <taxon>Chlamydiota</taxon>
        <taxon>Chlamydiia</taxon>
        <taxon>Chlamydiales</taxon>
        <taxon>Chlamydiaceae</taxon>
        <taxon>Chlamydia/Chlamydophila group</taxon>
        <taxon>Chlamydia</taxon>
    </lineage>
</organism>
<protein>
    <recommendedName>
        <fullName>Large cysteine-rich periplasmic protein OmcB</fullName>
        <shortName>Large-CRP</shortName>
    </recommendedName>
    <alternativeName>
        <fullName>60 kDa CRP</fullName>
    </alternativeName>
    <alternativeName>
        <fullName>60 kDa outer membrane protein</fullName>
    </alternativeName>
    <alternativeName>
        <fullName>Cysteine-rich outer membrane protein</fullName>
    </alternativeName>
</protein>
<keyword id="KW-0133">Cell shape</keyword>
<keyword id="KW-1015">Disulfide bond</keyword>
<keyword id="KW-0574">Periplasm</keyword>
<keyword id="KW-0732">Signal</keyword>
<proteinExistence type="inferred from homology"/>
<sequence length="558" mass="59899">MSKLIRRVVTVLALTSMASSFASGKTEVAAAESLVTRFIASAEASDSNILQTTAKKIRFGRNKNQKPEQKNNNAFCDKEFYPCEGGQCQSSVDTRQESCYGKMYSVRVNDDCNVEISQAVPEYATVGSPYPIEILAVGKKDCVNVVITQQLPCEVEFVSSDPVTTPTSDSKLIWTIDRLGQGERCKITVWVKPLKEGCCFTAATVCACPELRSYTKCGQPAICIKQEGPECACLRCPVCYKIEVCNTGSAIARSVVVDNPVPDGYTHASGQRVLSFNLGDMRPGDSKCFTVEFCPQKRGKVTNVATVSYCGGHKCSANVTTVINEPCVQVNISGADWSYVCKPVEYTIVVSNPGDLKLYDVVIEDTAPSGASILEAAGAEICCNKAVWCIKEMCPGETLQFKVVAKAQTPGKFTNQVVVKTNSDCGTCTSCAEVTTHWKGLAATHMCVIDTNDPICVGENTVYRICVTNRGSAEDTNVSLILKFSKELQPVSSSGPTKGTITGNTVVFDALPKLGSKESVEFSVTLKGVAPGDARGEAILSSDTLTVPVADTENTHVY</sequence>
<comment type="function">
    <text evidence="1">In elementary bodies (EBs, the infectious stage, which is able to survive outside the host cell) provides the structural integrity of the outer envelope through disulfide cross-links with the small cysteine-rich protein and the major outer membrane porin. It has been described in publications as the Sarkosyl-insoluble COMC (Chlamydia outer membrane complex), and serves as the functional equivalent of peptidoglycan. It is present but the disulfide bonds are reduced in reticulate bodies (RBs) (By similarity).</text>
</comment>
<comment type="subunit">
    <text evidence="1">Part of a disulfide cross-linked outer membrane complex (COMC) composed of the major outer membrane porin (MOMP), the small cysteine-rich protein (OmcA) and the large cysteine-rich periplasmic protein (OmcB).</text>
</comment>
<comment type="subcellular location">
    <subcellularLocation>
        <location evidence="3">Periplasm</location>
    </subcellularLocation>
</comment>
<comment type="caution">
    <text evidence="3">Was thought to be an outer membrane protein as it is part of a disulfide cross-linked complex that is insoluble in the detergent Sarkosyl; however based on experiments in C.psittaci it is likely to be periplasmic.</text>
</comment>